<dbReference type="EC" id="2.5.1.145" evidence="1"/>
<dbReference type="EMBL" id="AE014075">
    <property type="protein sequence ID" value="AAN81868.1"/>
    <property type="molecule type" value="Genomic_DNA"/>
</dbReference>
<dbReference type="RefSeq" id="WP_000204658.1">
    <property type="nucleotide sequence ID" value="NZ_CP051263.1"/>
</dbReference>
<dbReference type="SMR" id="P60957"/>
<dbReference type="STRING" id="199310.c3423"/>
<dbReference type="GeneID" id="93779170"/>
<dbReference type="KEGG" id="ecc:c3423"/>
<dbReference type="eggNOG" id="COG0682">
    <property type="taxonomic scope" value="Bacteria"/>
</dbReference>
<dbReference type="HOGENOM" id="CLU_013386_1_0_6"/>
<dbReference type="BioCyc" id="ECOL199310:C3423-MONOMER"/>
<dbReference type="UniPathway" id="UPA00664"/>
<dbReference type="Proteomes" id="UP000001410">
    <property type="component" value="Chromosome"/>
</dbReference>
<dbReference type="GO" id="GO:0005886">
    <property type="term" value="C:plasma membrane"/>
    <property type="evidence" value="ECO:0007669"/>
    <property type="project" value="UniProtKB-SubCell"/>
</dbReference>
<dbReference type="GO" id="GO:0008961">
    <property type="term" value="F:phosphatidylglycerol-prolipoprotein diacylglyceryl transferase activity"/>
    <property type="evidence" value="ECO:0007669"/>
    <property type="project" value="UniProtKB-UniRule"/>
</dbReference>
<dbReference type="GO" id="GO:0042158">
    <property type="term" value="P:lipoprotein biosynthetic process"/>
    <property type="evidence" value="ECO:0007669"/>
    <property type="project" value="UniProtKB-UniRule"/>
</dbReference>
<dbReference type="HAMAP" id="MF_01147">
    <property type="entry name" value="Lgt"/>
    <property type="match status" value="1"/>
</dbReference>
<dbReference type="InterPro" id="IPR001640">
    <property type="entry name" value="Lgt"/>
</dbReference>
<dbReference type="NCBIfam" id="TIGR00544">
    <property type="entry name" value="lgt"/>
    <property type="match status" value="1"/>
</dbReference>
<dbReference type="PANTHER" id="PTHR30589:SF0">
    <property type="entry name" value="PHOSPHATIDYLGLYCEROL--PROLIPOPROTEIN DIACYLGLYCERYL TRANSFERASE"/>
    <property type="match status" value="1"/>
</dbReference>
<dbReference type="PANTHER" id="PTHR30589">
    <property type="entry name" value="PROLIPOPROTEIN DIACYLGLYCERYL TRANSFERASE"/>
    <property type="match status" value="1"/>
</dbReference>
<dbReference type="Pfam" id="PF01790">
    <property type="entry name" value="LGT"/>
    <property type="match status" value="1"/>
</dbReference>
<dbReference type="PROSITE" id="PS01311">
    <property type="entry name" value="LGT"/>
    <property type="match status" value="1"/>
</dbReference>
<evidence type="ECO:0000255" key="1">
    <source>
        <dbReference type="HAMAP-Rule" id="MF_01147"/>
    </source>
</evidence>
<evidence type="ECO:0000305" key="2"/>
<gene>
    <name evidence="1" type="primary">lgt</name>
    <name type="synonym">umpA</name>
    <name type="ordered locus">c3423</name>
</gene>
<name>LGT_ECOL6</name>
<organism>
    <name type="scientific">Escherichia coli O6:H1 (strain CFT073 / ATCC 700928 / UPEC)</name>
    <dbReference type="NCBI Taxonomy" id="199310"/>
    <lineage>
        <taxon>Bacteria</taxon>
        <taxon>Pseudomonadati</taxon>
        <taxon>Pseudomonadota</taxon>
        <taxon>Gammaproteobacteria</taxon>
        <taxon>Enterobacterales</taxon>
        <taxon>Enterobacteriaceae</taxon>
        <taxon>Escherichia</taxon>
    </lineage>
</organism>
<proteinExistence type="inferred from homology"/>
<protein>
    <recommendedName>
        <fullName evidence="1">Phosphatidylglycerol--prolipoprotein diacylglyceryl transferase</fullName>
        <ecNumber evidence="1">2.5.1.145</ecNumber>
    </recommendedName>
</protein>
<keyword id="KW-0997">Cell inner membrane</keyword>
<keyword id="KW-1003">Cell membrane</keyword>
<keyword id="KW-0472">Membrane</keyword>
<keyword id="KW-1185">Reference proteome</keyword>
<keyword id="KW-0808">Transferase</keyword>
<keyword id="KW-0812">Transmembrane</keyword>
<keyword id="KW-1133">Transmembrane helix</keyword>
<accession>P60957</accession>
<accession>P37149</accession>
<comment type="function">
    <text evidence="1">Catalyzes the transfer of the diacylglyceryl group from phosphatidylglycerol to the sulfhydryl group of the N-terminal cysteine of a prolipoprotein, the first step in the formation of mature lipoproteins.</text>
</comment>
<comment type="catalytic activity">
    <reaction evidence="1">
        <text>L-cysteinyl-[prolipoprotein] + a 1,2-diacyl-sn-glycero-3-phospho-(1'-sn-glycerol) = an S-1,2-diacyl-sn-glyceryl-L-cysteinyl-[prolipoprotein] + sn-glycerol 1-phosphate + H(+)</text>
        <dbReference type="Rhea" id="RHEA:56712"/>
        <dbReference type="Rhea" id="RHEA-COMP:14679"/>
        <dbReference type="Rhea" id="RHEA-COMP:14680"/>
        <dbReference type="ChEBI" id="CHEBI:15378"/>
        <dbReference type="ChEBI" id="CHEBI:29950"/>
        <dbReference type="ChEBI" id="CHEBI:57685"/>
        <dbReference type="ChEBI" id="CHEBI:64716"/>
        <dbReference type="ChEBI" id="CHEBI:140658"/>
        <dbReference type="EC" id="2.5.1.145"/>
    </reaction>
</comment>
<comment type="pathway">
    <text evidence="1">Protein modification; lipoprotein biosynthesis (diacylglyceryl transfer).</text>
</comment>
<comment type="subcellular location">
    <subcellularLocation>
        <location evidence="1">Cell inner membrane</location>
        <topology evidence="1">Multi-pass membrane protein</topology>
    </subcellularLocation>
</comment>
<comment type="similarity">
    <text evidence="1 2">Belongs to the Lgt family.</text>
</comment>
<reference key="1">
    <citation type="journal article" date="2002" name="Proc. Natl. Acad. Sci. U.S.A.">
        <title>Extensive mosaic structure revealed by the complete genome sequence of uropathogenic Escherichia coli.</title>
        <authorList>
            <person name="Welch R.A."/>
            <person name="Burland V."/>
            <person name="Plunkett G. III"/>
            <person name="Redford P."/>
            <person name="Roesch P."/>
            <person name="Rasko D."/>
            <person name="Buckles E.L."/>
            <person name="Liou S.-R."/>
            <person name="Boutin A."/>
            <person name="Hackett J."/>
            <person name="Stroud D."/>
            <person name="Mayhew G.F."/>
            <person name="Rose D.J."/>
            <person name="Zhou S."/>
            <person name="Schwartz D.C."/>
            <person name="Perna N.T."/>
            <person name="Mobley H.L.T."/>
            <person name="Donnenberg M.S."/>
            <person name="Blattner F.R."/>
        </authorList>
    </citation>
    <scope>NUCLEOTIDE SEQUENCE [LARGE SCALE GENOMIC DNA]</scope>
    <source>
        <strain>CFT073 / ATCC 700928 / UPEC</strain>
    </source>
</reference>
<feature type="chain" id="PRO_0000172598" description="Phosphatidylglycerol--prolipoprotein diacylglyceryl transferase">
    <location>
        <begin position="1"/>
        <end position="291"/>
    </location>
</feature>
<feature type="transmembrane region" description="Helical" evidence="1">
    <location>
        <begin position="21"/>
        <end position="41"/>
    </location>
</feature>
<feature type="transmembrane region" description="Helical" evidence="1">
    <location>
        <begin position="60"/>
        <end position="80"/>
    </location>
</feature>
<feature type="transmembrane region" description="Helical" evidence="1">
    <location>
        <begin position="96"/>
        <end position="116"/>
    </location>
</feature>
<feature type="transmembrane region" description="Helical" evidence="1">
    <location>
        <begin position="225"/>
        <end position="245"/>
    </location>
</feature>
<feature type="transmembrane region" description="Helical" evidence="1">
    <location>
        <begin position="260"/>
        <end position="280"/>
    </location>
</feature>
<feature type="binding site" evidence="1">
    <location>
        <position position="143"/>
    </location>
    <ligand>
        <name>a 1,2-diacyl-sn-glycero-3-phospho-(1'-sn-glycerol)</name>
        <dbReference type="ChEBI" id="CHEBI:64716"/>
    </ligand>
</feature>
<sequence>MTSSYLHFPEFDPVIFSIGPVALHWYGLMYLVGFIFAMWLATRRANRPGSGWTKNEVENLLYAGFLGVFLGGRIGYVLFYNFPQFMADPLYLFRVWDGGMSFHGGLIGVIVVMIIFARRTKRSFFQVSDFIAPLIPFGLGAGRLGNFINGELWGRVDPNFPFAMLFPGSRTEDILLLQTNPQWQSIFDTYGVLPRHPSQLYELLLEGVVLFIILNLYIRKPRPMGAVSGLFLIGYGAFRIIVEFFRQPDAQFTGAWVQYISMGQILSIPMIVAGVIMMVWAYRRSPQQHVS</sequence>